<protein>
    <recommendedName>
        <fullName evidence="1">Adenine phosphoribosyltransferase</fullName>
        <shortName evidence="1">APRT</shortName>
        <ecNumber evidence="1">2.4.2.7</ecNumber>
    </recommendedName>
</protein>
<feature type="chain" id="PRO_0000149478" description="Adenine phosphoribosyltransferase">
    <location>
        <begin position="1"/>
        <end position="173"/>
    </location>
</feature>
<comment type="function">
    <text evidence="1">Catalyzes a salvage reaction resulting in the formation of AMP, that is energically less costly than de novo synthesis.</text>
</comment>
<comment type="catalytic activity">
    <reaction evidence="1">
        <text>AMP + diphosphate = 5-phospho-alpha-D-ribose 1-diphosphate + adenine</text>
        <dbReference type="Rhea" id="RHEA:16609"/>
        <dbReference type="ChEBI" id="CHEBI:16708"/>
        <dbReference type="ChEBI" id="CHEBI:33019"/>
        <dbReference type="ChEBI" id="CHEBI:58017"/>
        <dbReference type="ChEBI" id="CHEBI:456215"/>
        <dbReference type="EC" id="2.4.2.7"/>
    </reaction>
</comment>
<comment type="pathway">
    <text evidence="1">Purine metabolism; AMP biosynthesis via salvage pathway; AMP from adenine: step 1/1.</text>
</comment>
<comment type="subunit">
    <text evidence="1">Homodimer.</text>
</comment>
<comment type="subcellular location">
    <subcellularLocation>
        <location evidence="1">Cytoplasm</location>
    </subcellularLocation>
</comment>
<comment type="similarity">
    <text evidence="1">Belongs to the purine/pyrimidine phosphoribosyltransferase family.</text>
</comment>
<organism>
    <name type="scientific">Thermotoga maritima (strain ATCC 43589 / DSM 3109 / JCM 10099 / NBRC 100826 / MSB8)</name>
    <dbReference type="NCBI Taxonomy" id="243274"/>
    <lineage>
        <taxon>Bacteria</taxon>
        <taxon>Thermotogati</taxon>
        <taxon>Thermotogota</taxon>
        <taxon>Thermotogae</taxon>
        <taxon>Thermotogales</taxon>
        <taxon>Thermotogaceae</taxon>
        <taxon>Thermotoga</taxon>
    </lineage>
</organism>
<evidence type="ECO:0000255" key="1">
    <source>
        <dbReference type="HAMAP-Rule" id="MF_00004"/>
    </source>
</evidence>
<name>APT_THEMA</name>
<gene>
    <name evidence="1" type="primary">apt</name>
    <name type="ordered locus">TM_1384</name>
</gene>
<accession>Q9X1A4</accession>
<reference key="1">
    <citation type="journal article" date="1999" name="Nature">
        <title>Evidence for lateral gene transfer between Archaea and Bacteria from genome sequence of Thermotoga maritima.</title>
        <authorList>
            <person name="Nelson K.E."/>
            <person name="Clayton R.A."/>
            <person name="Gill S.R."/>
            <person name="Gwinn M.L."/>
            <person name="Dodson R.J."/>
            <person name="Haft D.H."/>
            <person name="Hickey E.K."/>
            <person name="Peterson J.D."/>
            <person name="Nelson W.C."/>
            <person name="Ketchum K.A."/>
            <person name="McDonald L.A."/>
            <person name="Utterback T.R."/>
            <person name="Malek J.A."/>
            <person name="Linher K.D."/>
            <person name="Garrett M.M."/>
            <person name="Stewart A.M."/>
            <person name="Cotton M.D."/>
            <person name="Pratt M.S."/>
            <person name="Phillips C.A."/>
            <person name="Richardson D.L."/>
            <person name="Heidelberg J.F."/>
            <person name="Sutton G.G."/>
            <person name="Fleischmann R.D."/>
            <person name="Eisen J.A."/>
            <person name="White O."/>
            <person name="Salzberg S.L."/>
            <person name="Smith H.O."/>
            <person name="Venter J.C."/>
            <person name="Fraser C.M."/>
        </authorList>
    </citation>
    <scope>NUCLEOTIDE SEQUENCE [LARGE SCALE GENOMIC DNA]</scope>
    <source>
        <strain>ATCC 43589 / DSM 3109 / JCM 10099 / NBRC 100826 / MSB8</strain>
    </source>
</reference>
<dbReference type="EC" id="2.4.2.7" evidence="1"/>
<dbReference type="EMBL" id="AE000512">
    <property type="protein sequence ID" value="AAD36454.1"/>
    <property type="molecule type" value="Genomic_DNA"/>
</dbReference>
<dbReference type="PIR" id="A72262">
    <property type="entry name" value="A72262"/>
</dbReference>
<dbReference type="RefSeq" id="NP_229185.1">
    <property type="nucleotide sequence ID" value="NC_000853.1"/>
</dbReference>
<dbReference type="SMR" id="Q9X1A4"/>
<dbReference type="FunCoup" id="Q9X1A4">
    <property type="interactions" value="263"/>
</dbReference>
<dbReference type="STRING" id="243274.TM_1384"/>
<dbReference type="PaxDb" id="243274-THEMA_07405"/>
<dbReference type="EnsemblBacteria" id="AAD36454">
    <property type="protein sequence ID" value="AAD36454"/>
    <property type="gene ID" value="TM_1384"/>
</dbReference>
<dbReference type="KEGG" id="tma:TM1384"/>
<dbReference type="PATRIC" id="fig|243274.5.peg.1396"/>
<dbReference type="eggNOG" id="COG0503">
    <property type="taxonomic scope" value="Bacteria"/>
</dbReference>
<dbReference type="InParanoid" id="Q9X1A4"/>
<dbReference type="OrthoDB" id="9803963at2"/>
<dbReference type="UniPathway" id="UPA00588">
    <property type="reaction ID" value="UER00646"/>
</dbReference>
<dbReference type="Proteomes" id="UP000008183">
    <property type="component" value="Chromosome"/>
</dbReference>
<dbReference type="GO" id="GO:0005737">
    <property type="term" value="C:cytoplasm"/>
    <property type="evidence" value="ECO:0000318"/>
    <property type="project" value="GO_Central"/>
</dbReference>
<dbReference type="GO" id="GO:0002055">
    <property type="term" value="F:adenine binding"/>
    <property type="evidence" value="ECO:0000318"/>
    <property type="project" value="GO_Central"/>
</dbReference>
<dbReference type="GO" id="GO:0003999">
    <property type="term" value="F:adenine phosphoribosyltransferase activity"/>
    <property type="evidence" value="ECO:0000318"/>
    <property type="project" value="GO_Central"/>
</dbReference>
<dbReference type="GO" id="GO:0016208">
    <property type="term" value="F:AMP binding"/>
    <property type="evidence" value="ECO:0000318"/>
    <property type="project" value="GO_Central"/>
</dbReference>
<dbReference type="GO" id="GO:0006168">
    <property type="term" value="P:adenine salvage"/>
    <property type="evidence" value="ECO:0000318"/>
    <property type="project" value="GO_Central"/>
</dbReference>
<dbReference type="GO" id="GO:0044209">
    <property type="term" value="P:AMP salvage"/>
    <property type="evidence" value="ECO:0000318"/>
    <property type="project" value="GO_Central"/>
</dbReference>
<dbReference type="GO" id="GO:0006166">
    <property type="term" value="P:purine ribonucleoside salvage"/>
    <property type="evidence" value="ECO:0007669"/>
    <property type="project" value="UniProtKB-KW"/>
</dbReference>
<dbReference type="CDD" id="cd06223">
    <property type="entry name" value="PRTases_typeI"/>
    <property type="match status" value="1"/>
</dbReference>
<dbReference type="FunFam" id="3.40.50.2020:FF:000021">
    <property type="entry name" value="Adenine phosphoribosyltransferase"/>
    <property type="match status" value="1"/>
</dbReference>
<dbReference type="Gene3D" id="3.40.50.2020">
    <property type="match status" value="1"/>
</dbReference>
<dbReference type="HAMAP" id="MF_00004">
    <property type="entry name" value="Aden_phosphoribosyltr"/>
    <property type="match status" value="1"/>
</dbReference>
<dbReference type="InterPro" id="IPR005764">
    <property type="entry name" value="Ade_phspho_trans"/>
</dbReference>
<dbReference type="InterPro" id="IPR000836">
    <property type="entry name" value="PRibTrfase_dom"/>
</dbReference>
<dbReference type="InterPro" id="IPR029057">
    <property type="entry name" value="PRTase-like"/>
</dbReference>
<dbReference type="InterPro" id="IPR050054">
    <property type="entry name" value="UPRTase/APRTase"/>
</dbReference>
<dbReference type="NCBIfam" id="TIGR01090">
    <property type="entry name" value="apt"/>
    <property type="match status" value="1"/>
</dbReference>
<dbReference type="NCBIfam" id="NF002633">
    <property type="entry name" value="PRK02304.1-2"/>
    <property type="match status" value="1"/>
</dbReference>
<dbReference type="NCBIfam" id="NF002634">
    <property type="entry name" value="PRK02304.1-3"/>
    <property type="match status" value="1"/>
</dbReference>
<dbReference type="NCBIfam" id="NF002636">
    <property type="entry name" value="PRK02304.1-5"/>
    <property type="match status" value="1"/>
</dbReference>
<dbReference type="PANTHER" id="PTHR32315">
    <property type="entry name" value="ADENINE PHOSPHORIBOSYLTRANSFERASE"/>
    <property type="match status" value="1"/>
</dbReference>
<dbReference type="PANTHER" id="PTHR32315:SF3">
    <property type="entry name" value="ADENINE PHOSPHORIBOSYLTRANSFERASE"/>
    <property type="match status" value="1"/>
</dbReference>
<dbReference type="Pfam" id="PF00156">
    <property type="entry name" value="Pribosyltran"/>
    <property type="match status" value="1"/>
</dbReference>
<dbReference type="SUPFAM" id="SSF53271">
    <property type="entry name" value="PRTase-like"/>
    <property type="match status" value="1"/>
</dbReference>
<dbReference type="PROSITE" id="PS00103">
    <property type="entry name" value="PUR_PYR_PR_TRANSFER"/>
    <property type="match status" value="1"/>
</dbReference>
<proteinExistence type="inferred from homology"/>
<sequence length="173" mass="19766">MFKLDLKRFIRDIPDFPQKGIVFRDITPLLRNQEAFKEAIDRMCELVFDREFDLVVAPEARGFILGAAMAYKLGKGFVPVRKPGKLPYKTVYEEYQLEYGTEQLHIHEDAIEKGQKVLIVDDVLATGGTAEALIRLVKKLGGEVVSLAFLVELSYLEPRKRLEGYDVKTLIVY</sequence>
<keyword id="KW-0963">Cytoplasm</keyword>
<keyword id="KW-0328">Glycosyltransferase</keyword>
<keyword id="KW-0660">Purine salvage</keyword>
<keyword id="KW-1185">Reference proteome</keyword>
<keyword id="KW-0808">Transferase</keyword>